<feature type="chain" id="PRO_0000284777" description="Dynein regulatory complex subunit 2">
    <location>
        <begin position="1"/>
        <end position="498"/>
    </location>
</feature>
<feature type="coiled-coil region" evidence="3">
    <location>
        <begin position="98"/>
        <end position="160"/>
    </location>
</feature>
<feature type="coiled-coil region" evidence="3">
    <location>
        <begin position="250"/>
        <end position="311"/>
    </location>
</feature>
<feature type="coiled-coil region" evidence="3">
    <location>
        <begin position="417"/>
        <end position="441"/>
    </location>
</feature>
<name>DRC2_BOVIN</name>
<keyword id="KW-0966">Cell projection</keyword>
<keyword id="KW-0969">Cilium</keyword>
<keyword id="KW-0175">Coiled coil</keyword>
<keyword id="KW-0963">Cytoplasm</keyword>
<keyword id="KW-0206">Cytoskeleton</keyword>
<keyword id="KW-0282">Flagellum</keyword>
<keyword id="KW-1185">Reference proteome</keyword>
<organism>
    <name type="scientific">Bos taurus</name>
    <name type="common">Bovine</name>
    <dbReference type="NCBI Taxonomy" id="9913"/>
    <lineage>
        <taxon>Eukaryota</taxon>
        <taxon>Metazoa</taxon>
        <taxon>Chordata</taxon>
        <taxon>Craniata</taxon>
        <taxon>Vertebrata</taxon>
        <taxon>Euteleostomi</taxon>
        <taxon>Mammalia</taxon>
        <taxon>Eutheria</taxon>
        <taxon>Laurasiatheria</taxon>
        <taxon>Artiodactyla</taxon>
        <taxon>Ruminantia</taxon>
        <taxon>Pecora</taxon>
        <taxon>Bovidae</taxon>
        <taxon>Bovinae</taxon>
        <taxon>Bos</taxon>
    </lineage>
</organism>
<sequence>MSKKGKKAKVPLSDEEQLLLFQQKLLAEEEMAKKKERLLNQFLKDKLAKEEHNSALNLNKINTQWRTVLREIKTRELHKDIEILSQTFERVVDCKDSVIKSLAKDLSEAEEQHAHALRSHLHSIDQLLALQRCRLNLLEENYNMELEALTKEFETERKTIIDQHEKEIHYLQDVFMAMEQNYIDSEYESKLEFQSMWDDLKNKNLEEKHFLRLQLENIVEDLWRRFQDALKNYTDATEDRKIAFETLKVKDEKSSREIEAQMKKIQKLQDSIIIFKGKILVHSRESEEQNQDIREDKELVLVQLRKLKAQRTQARGIAQENLVKLTLESSATLKALREIVDKGEKILKLAEICRKFETEEEKVLPFYSSVLTPKEQEEIETMDLEEFNEELGKVIMDYKGMENFWKRYNKVKLEQLSLRHRRAQLLEINEKLREMLRQYLDGISVSDEVLSQLNPLFIVNHRSNLPQLLPMPTAQPGDKKPPATYNIIEAAHVVSHTL</sequence>
<reference key="1">
    <citation type="submission" date="2005-12" db="EMBL/GenBank/DDBJ databases">
        <authorList>
            <consortium name="NIH - Mammalian Gene Collection (MGC) project"/>
        </authorList>
    </citation>
    <scope>NUCLEOTIDE SEQUENCE [LARGE SCALE MRNA]</scope>
    <source>
        <strain>Crossbred X Angus</strain>
        <tissue>Liver</tissue>
    </source>
</reference>
<gene>
    <name type="primary">CCDC65</name>
    <name evidence="2" type="synonym">DRC2</name>
</gene>
<evidence type="ECO:0000250" key="1">
    <source>
        <dbReference type="UniProtKB" id="A8JB22"/>
    </source>
</evidence>
<evidence type="ECO:0000250" key="2">
    <source>
        <dbReference type="UniProtKB" id="Q8IXS2"/>
    </source>
</evidence>
<evidence type="ECO:0000255" key="3"/>
<protein>
    <recommendedName>
        <fullName evidence="2">Dynein regulatory complex subunit 2</fullName>
    </recommendedName>
    <alternativeName>
        <fullName>Coiled-coil domain-containing protein 65</fullName>
    </alternativeName>
</protein>
<comment type="function">
    <text evidence="1 2">Component of the nexin-dynein regulatory complex (N-DRC), a key regulator of ciliary/flagellar motility which maintains the alignment and integrity of the distal axoneme and regulates microtubule sliding in motile axonemes. Plays a critical role in the assembly of N-DRC and also stabilizes the assembly of multiple inner dynein arms and radial spokes. Coassembles with DRC1 to form a central scaffold needed for assembly of the N-DRC and its attachment to the outer doublet microtubules.</text>
</comment>
<comment type="subunit">
    <text evidence="1 2">Component of the nexin-dynein regulatory complex (N-DRC). Interacts with DRC1.</text>
</comment>
<comment type="subcellular location">
    <subcellularLocation>
        <location evidence="1">Cytoplasm</location>
        <location evidence="1">Cytoskeleton</location>
        <location evidence="1">Flagellum basal body</location>
    </subcellularLocation>
    <subcellularLocation>
        <location evidence="1">Cell projection</location>
        <location evidence="1">Cilium</location>
        <location evidence="1">Flagellum</location>
    </subcellularLocation>
    <subcellularLocation>
        <location evidence="1">Cytoplasm</location>
        <location evidence="1">Cytoskeleton</location>
        <location evidence="1">Flagellum axoneme</location>
    </subcellularLocation>
</comment>
<comment type="similarity">
    <text>Belongs to the DRC2 family.</text>
</comment>
<proteinExistence type="evidence at transcript level"/>
<accession>Q2TA16</accession>
<dbReference type="EMBL" id="BC111168">
    <property type="protein sequence ID" value="AAI11169.1"/>
    <property type="molecule type" value="mRNA"/>
</dbReference>
<dbReference type="RefSeq" id="NP_001033255.1">
    <property type="nucleotide sequence ID" value="NM_001038166.2"/>
</dbReference>
<dbReference type="EMDB" id="EMD-50664"/>
<dbReference type="SMR" id="Q2TA16"/>
<dbReference type="FunCoup" id="Q2TA16">
    <property type="interactions" value="402"/>
</dbReference>
<dbReference type="STRING" id="9913.ENSBTAP00000021022"/>
<dbReference type="PaxDb" id="9913-ENSBTAP00000021022"/>
<dbReference type="Ensembl" id="ENSBTAT00000021022.5">
    <property type="protein sequence ID" value="ENSBTAP00000021022.3"/>
    <property type="gene ID" value="ENSBTAG00000015825.5"/>
</dbReference>
<dbReference type="GeneID" id="535207"/>
<dbReference type="KEGG" id="bta:535207"/>
<dbReference type="CTD" id="85478"/>
<dbReference type="VEuPathDB" id="HostDB:ENSBTAG00000015825"/>
<dbReference type="VGNC" id="VGNC:26908">
    <property type="gene designation" value="CCDC65"/>
</dbReference>
<dbReference type="eggNOG" id="ENOG502QQDD">
    <property type="taxonomic scope" value="Eukaryota"/>
</dbReference>
<dbReference type="GeneTree" id="ENSGT00940000153804"/>
<dbReference type="HOGENOM" id="CLU_026536_1_0_1"/>
<dbReference type="InParanoid" id="Q2TA16"/>
<dbReference type="OMA" id="WEYLDLF"/>
<dbReference type="OrthoDB" id="7760980at2759"/>
<dbReference type="TreeFam" id="TF326074"/>
<dbReference type="Proteomes" id="UP000009136">
    <property type="component" value="Chromosome 5"/>
</dbReference>
<dbReference type="Bgee" id="ENSBTAG00000015825">
    <property type="expression patterns" value="Expressed in oviduct epithelium and 74 other cell types or tissues"/>
</dbReference>
<dbReference type="GO" id="GO:0005858">
    <property type="term" value="C:axonemal dynein complex"/>
    <property type="evidence" value="ECO:0007669"/>
    <property type="project" value="InterPro"/>
</dbReference>
<dbReference type="GO" id="GO:0005930">
    <property type="term" value="C:axoneme"/>
    <property type="evidence" value="ECO:0000318"/>
    <property type="project" value="GO_Central"/>
</dbReference>
<dbReference type="GO" id="GO:0036064">
    <property type="term" value="C:ciliary basal body"/>
    <property type="evidence" value="ECO:0007669"/>
    <property type="project" value="Ensembl"/>
</dbReference>
<dbReference type="GO" id="GO:0031514">
    <property type="term" value="C:motile cilium"/>
    <property type="evidence" value="ECO:0007669"/>
    <property type="project" value="UniProtKB-SubCell"/>
</dbReference>
<dbReference type="GO" id="GO:0070286">
    <property type="term" value="P:axonemal dynein complex assembly"/>
    <property type="evidence" value="ECO:0000318"/>
    <property type="project" value="GO_Central"/>
</dbReference>
<dbReference type="GO" id="GO:0060285">
    <property type="term" value="P:cilium-dependent cell motility"/>
    <property type="evidence" value="ECO:0000318"/>
    <property type="project" value="GO_Central"/>
</dbReference>
<dbReference type="GO" id="GO:0003352">
    <property type="term" value="P:regulation of cilium movement"/>
    <property type="evidence" value="ECO:0000318"/>
    <property type="project" value="GO_Central"/>
</dbReference>
<dbReference type="InterPro" id="IPR039505">
    <property type="entry name" value="DRC1/2_N"/>
</dbReference>
<dbReference type="InterPro" id="IPR039750">
    <property type="entry name" value="DRC1/DRC2"/>
</dbReference>
<dbReference type="PANTHER" id="PTHR21625:SF0">
    <property type="entry name" value="DYNEIN REGULATORY COMPLEX SUBUNIT 2"/>
    <property type="match status" value="1"/>
</dbReference>
<dbReference type="PANTHER" id="PTHR21625">
    <property type="entry name" value="NYD-SP28 PROTEIN"/>
    <property type="match status" value="1"/>
</dbReference>
<dbReference type="Pfam" id="PF14772">
    <property type="entry name" value="NYD-SP28"/>
    <property type="match status" value="1"/>
</dbReference>